<protein>
    <recommendedName>
        <fullName evidence="1">Phosphoribosylformylglycinamidine synthase subunit PurL</fullName>
        <shortName evidence="1">FGAM synthase</shortName>
        <ecNumber evidence="1">6.3.5.3</ecNumber>
    </recommendedName>
    <alternativeName>
        <fullName evidence="1">Formylglycinamide ribonucleotide amidotransferase subunit II</fullName>
        <shortName evidence="1">FGAR amidotransferase II</shortName>
        <shortName evidence="1">FGAR-AT II</shortName>
    </alternativeName>
    <alternativeName>
        <fullName evidence="1">Glutamine amidotransferase PurL</fullName>
    </alternativeName>
    <alternativeName>
        <fullName evidence="1">Phosphoribosylformylglycinamidine synthase subunit II</fullName>
    </alternativeName>
</protein>
<comment type="function">
    <text evidence="1">Part of the phosphoribosylformylglycinamidine synthase complex involved in the purines biosynthetic pathway. Catalyzes the ATP-dependent conversion of formylglycinamide ribonucleotide (FGAR) and glutamine to yield formylglycinamidine ribonucleotide (FGAM) and glutamate. The FGAM synthase complex is composed of three subunits. PurQ produces an ammonia molecule by converting glutamine to glutamate. PurL transfers the ammonia molecule to FGAR to form FGAM in an ATP-dependent manner. PurS interacts with PurQ and PurL and is thought to assist in the transfer of the ammonia molecule from PurQ to PurL.</text>
</comment>
<comment type="catalytic activity">
    <reaction evidence="1">
        <text>N(2)-formyl-N(1)-(5-phospho-beta-D-ribosyl)glycinamide + L-glutamine + ATP + H2O = 2-formamido-N(1)-(5-O-phospho-beta-D-ribosyl)acetamidine + L-glutamate + ADP + phosphate + H(+)</text>
        <dbReference type="Rhea" id="RHEA:17129"/>
        <dbReference type="ChEBI" id="CHEBI:15377"/>
        <dbReference type="ChEBI" id="CHEBI:15378"/>
        <dbReference type="ChEBI" id="CHEBI:29985"/>
        <dbReference type="ChEBI" id="CHEBI:30616"/>
        <dbReference type="ChEBI" id="CHEBI:43474"/>
        <dbReference type="ChEBI" id="CHEBI:58359"/>
        <dbReference type="ChEBI" id="CHEBI:147286"/>
        <dbReference type="ChEBI" id="CHEBI:147287"/>
        <dbReference type="ChEBI" id="CHEBI:456216"/>
        <dbReference type="EC" id="6.3.5.3"/>
    </reaction>
</comment>
<comment type="pathway">
    <text evidence="1">Purine metabolism; IMP biosynthesis via de novo pathway; 5-amino-1-(5-phospho-D-ribosyl)imidazole from N(2)-formyl-N(1)-(5-phospho-D-ribosyl)glycinamide: step 1/2.</text>
</comment>
<comment type="subunit">
    <text evidence="1">Monomer. Part of the FGAM synthase complex composed of 1 PurL, 1 PurQ and 2 PurS subunits.</text>
</comment>
<comment type="subcellular location">
    <subcellularLocation>
        <location evidence="1">Cytoplasm</location>
    </subcellularLocation>
</comment>
<comment type="similarity">
    <text evidence="1">Belongs to the FGAMS family.</text>
</comment>
<reference key="1">
    <citation type="journal article" date="2015" name="Genome Announc.">
        <title>Complete genome sequence of Anaeromyxobacter sp. Fw109-5, an anaerobic, metal-reducing bacterium isolated from a contaminated subsurface environment.</title>
        <authorList>
            <person name="Hwang C."/>
            <person name="Copeland A."/>
            <person name="Lucas S."/>
            <person name="Lapidus A."/>
            <person name="Barry K."/>
            <person name="Glavina Del Rio T."/>
            <person name="Dalin E."/>
            <person name="Tice H."/>
            <person name="Pitluck S."/>
            <person name="Sims D."/>
            <person name="Brettin T."/>
            <person name="Bruce D.C."/>
            <person name="Detter J.C."/>
            <person name="Han C.S."/>
            <person name="Schmutz J."/>
            <person name="Larimer F.W."/>
            <person name="Land M.L."/>
            <person name="Hauser L.J."/>
            <person name="Kyrpides N."/>
            <person name="Lykidis A."/>
            <person name="Richardson P."/>
            <person name="Belieav A."/>
            <person name="Sanford R.A."/>
            <person name="Loeffler F.E."/>
            <person name="Fields M.W."/>
        </authorList>
    </citation>
    <scope>NUCLEOTIDE SEQUENCE [LARGE SCALE GENOMIC DNA]</scope>
    <source>
        <strain>Fw109-5</strain>
    </source>
</reference>
<dbReference type="EC" id="6.3.5.3" evidence="1"/>
<dbReference type="EMBL" id="CP000769">
    <property type="protein sequence ID" value="ABS28540.1"/>
    <property type="molecule type" value="Genomic_DNA"/>
</dbReference>
<dbReference type="RefSeq" id="WP_012099185.1">
    <property type="nucleotide sequence ID" value="NC_009675.1"/>
</dbReference>
<dbReference type="SMR" id="A7HIJ4"/>
<dbReference type="STRING" id="404589.Anae109_4362"/>
<dbReference type="KEGG" id="afw:Anae109_4362"/>
<dbReference type="eggNOG" id="COG0046">
    <property type="taxonomic scope" value="Bacteria"/>
</dbReference>
<dbReference type="HOGENOM" id="CLU_003100_0_1_7"/>
<dbReference type="OrthoDB" id="9804441at2"/>
<dbReference type="UniPathway" id="UPA00074">
    <property type="reaction ID" value="UER00128"/>
</dbReference>
<dbReference type="Proteomes" id="UP000006382">
    <property type="component" value="Chromosome"/>
</dbReference>
<dbReference type="GO" id="GO:0005737">
    <property type="term" value="C:cytoplasm"/>
    <property type="evidence" value="ECO:0007669"/>
    <property type="project" value="UniProtKB-SubCell"/>
</dbReference>
<dbReference type="GO" id="GO:0005524">
    <property type="term" value="F:ATP binding"/>
    <property type="evidence" value="ECO:0007669"/>
    <property type="project" value="UniProtKB-UniRule"/>
</dbReference>
<dbReference type="GO" id="GO:0000287">
    <property type="term" value="F:magnesium ion binding"/>
    <property type="evidence" value="ECO:0007669"/>
    <property type="project" value="UniProtKB-UniRule"/>
</dbReference>
<dbReference type="GO" id="GO:0004642">
    <property type="term" value="F:phosphoribosylformylglycinamidine synthase activity"/>
    <property type="evidence" value="ECO:0007669"/>
    <property type="project" value="UniProtKB-UniRule"/>
</dbReference>
<dbReference type="GO" id="GO:0006189">
    <property type="term" value="P:'de novo' IMP biosynthetic process"/>
    <property type="evidence" value="ECO:0007669"/>
    <property type="project" value="UniProtKB-UniRule"/>
</dbReference>
<dbReference type="CDD" id="cd02203">
    <property type="entry name" value="PurL_repeat1"/>
    <property type="match status" value="1"/>
</dbReference>
<dbReference type="CDD" id="cd02204">
    <property type="entry name" value="PurL_repeat2"/>
    <property type="match status" value="1"/>
</dbReference>
<dbReference type="FunFam" id="3.30.1330.10:FF:000004">
    <property type="entry name" value="Phosphoribosylformylglycinamidine synthase subunit PurL"/>
    <property type="match status" value="1"/>
</dbReference>
<dbReference type="Gene3D" id="3.90.650.10">
    <property type="entry name" value="PurM-like C-terminal domain"/>
    <property type="match status" value="2"/>
</dbReference>
<dbReference type="Gene3D" id="3.30.1330.10">
    <property type="entry name" value="PurM-like, N-terminal domain"/>
    <property type="match status" value="2"/>
</dbReference>
<dbReference type="HAMAP" id="MF_00420">
    <property type="entry name" value="PurL_2"/>
    <property type="match status" value="1"/>
</dbReference>
<dbReference type="InterPro" id="IPR010074">
    <property type="entry name" value="PRibForGlyAmidine_synth_PurL"/>
</dbReference>
<dbReference type="InterPro" id="IPR041609">
    <property type="entry name" value="PurL_linker"/>
</dbReference>
<dbReference type="InterPro" id="IPR010918">
    <property type="entry name" value="PurM-like_C_dom"/>
</dbReference>
<dbReference type="InterPro" id="IPR036676">
    <property type="entry name" value="PurM-like_C_sf"/>
</dbReference>
<dbReference type="InterPro" id="IPR016188">
    <property type="entry name" value="PurM-like_N"/>
</dbReference>
<dbReference type="InterPro" id="IPR036921">
    <property type="entry name" value="PurM-like_N_sf"/>
</dbReference>
<dbReference type="NCBIfam" id="TIGR01736">
    <property type="entry name" value="FGAM_synth_II"/>
    <property type="match status" value="1"/>
</dbReference>
<dbReference type="NCBIfam" id="NF002290">
    <property type="entry name" value="PRK01213.1"/>
    <property type="match status" value="1"/>
</dbReference>
<dbReference type="PANTHER" id="PTHR43555">
    <property type="entry name" value="PHOSPHORIBOSYLFORMYLGLYCINAMIDINE SYNTHASE SUBUNIT PURL"/>
    <property type="match status" value="1"/>
</dbReference>
<dbReference type="PANTHER" id="PTHR43555:SF1">
    <property type="entry name" value="PHOSPHORIBOSYLFORMYLGLYCINAMIDINE SYNTHASE SUBUNIT PURL"/>
    <property type="match status" value="1"/>
</dbReference>
<dbReference type="Pfam" id="PF00586">
    <property type="entry name" value="AIRS"/>
    <property type="match status" value="2"/>
</dbReference>
<dbReference type="Pfam" id="PF02769">
    <property type="entry name" value="AIRS_C"/>
    <property type="match status" value="2"/>
</dbReference>
<dbReference type="Pfam" id="PF18072">
    <property type="entry name" value="FGAR-AT_linker"/>
    <property type="match status" value="1"/>
</dbReference>
<dbReference type="PIRSF" id="PIRSF001587">
    <property type="entry name" value="FGAM_synthase_II"/>
    <property type="match status" value="1"/>
</dbReference>
<dbReference type="SUPFAM" id="SSF56042">
    <property type="entry name" value="PurM C-terminal domain-like"/>
    <property type="match status" value="2"/>
</dbReference>
<dbReference type="SUPFAM" id="SSF55326">
    <property type="entry name" value="PurM N-terminal domain-like"/>
    <property type="match status" value="2"/>
</dbReference>
<name>PURL_ANADF</name>
<evidence type="ECO:0000255" key="1">
    <source>
        <dbReference type="HAMAP-Rule" id="MF_00420"/>
    </source>
</evidence>
<proteinExistence type="inferred from homology"/>
<organism>
    <name type="scientific">Anaeromyxobacter sp. (strain Fw109-5)</name>
    <dbReference type="NCBI Taxonomy" id="404589"/>
    <lineage>
        <taxon>Bacteria</taxon>
        <taxon>Pseudomonadati</taxon>
        <taxon>Myxococcota</taxon>
        <taxon>Myxococcia</taxon>
        <taxon>Myxococcales</taxon>
        <taxon>Cystobacterineae</taxon>
        <taxon>Anaeromyxobacteraceae</taxon>
        <taxon>Anaeromyxobacter</taxon>
    </lineage>
</organism>
<gene>
    <name evidence="1" type="primary">purL</name>
    <name type="ordered locus">Anae109_4362</name>
</gene>
<feature type="chain" id="PRO_1000050295" description="Phosphoribosylformylglycinamidine synthase subunit PurL">
    <location>
        <begin position="1"/>
        <end position="767"/>
    </location>
</feature>
<feature type="active site" evidence="1">
    <location>
        <position position="46"/>
    </location>
</feature>
<feature type="active site" description="Proton acceptor" evidence="1">
    <location>
        <position position="92"/>
    </location>
</feature>
<feature type="binding site" evidence="1">
    <location>
        <position position="49"/>
    </location>
    <ligand>
        <name>ATP</name>
        <dbReference type="ChEBI" id="CHEBI:30616"/>
    </ligand>
</feature>
<feature type="binding site" evidence="1">
    <location>
        <position position="88"/>
    </location>
    <ligand>
        <name>ATP</name>
        <dbReference type="ChEBI" id="CHEBI:30616"/>
    </ligand>
</feature>
<feature type="binding site" evidence="1">
    <location>
        <position position="90"/>
    </location>
    <ligand>
        <name>Mg(2+)</name>
        <dbReference type="ChEBI" id="CHEBI:18420"/>
        <label>1</label>
    </ligand>
</feature>
<feature type="binding site" evidence="1">
    <location>
        <begin position="91"/>
        <end position="94"/>
    </location>
    <ligand>
        <name>substrate</name>
    </ligand>
</feature>
<feature type="binding site" evidence="1">
    <location>
        <position position="113"/>
    </location>
    <ligand>
        <name>substrate</name>
    </ligand>
</feature>
<feature type="binding site" evidence="1">
    <location>
        <position position="114"/>
    </location>
    <ligand>
        <name>Mg(2+)</name>
        <dbReference type="ChEBI" id="CHEBI:18420"/>
        <label>2</label>
    </ligand>
</feature>
<feature type="binding site" evidence="1">
    <location>
        <position position="237"/>
    </location>
    <ligand>
        <name>substrate</name>
    </ligand>
</feature>
<feature type="binding site" evidence="1">
    <location>
        <position position="265"/>
    </location>
    <ligand>
        <name>Mg(2+)</name>
        <dbReference type="ChEBI" id="CHEBI:18420"/>
        <label>2</label>
    </ligand>
</feature>
<feature type="binding site" evidence="1">
    <location>
        <begin position="309"/>
        <end position="311"/>
    </location>
    <ligand>
        <name>substrate</name>
    </ligand>
</feature>
<feature type="binding site" evidence="1">
    <location>
        <position position="498"/>
    </location>
    <ligand>
        <name>ATP</name>
        <dbReference type="ChEBI" id="CHEBI:30616"/>
    </ligand>
</feature>
<feature type="binding site" evidence="1">
    <location>
        <position position="535"/>
    </location>
    <ligand>
        <name>ATP</name>
        <dbReference type="ChEBI" id="CHEBI:30616"/>
    </ligand>
</feature>
<feature type="binding site" evidence="1">
    <location>
        <position position="536"/>
    </location>
    <ligand>
        <name>Mg(2+)</name>
        <dbReference type="ChEBI" id="CHEBI:18420"/>
        <label>1</label>
    </ligand>
</feature>
<feature type="binding site" evidence="1">
    <location>
        <position position="538"/>
    </location>
    <ligand>
        <name>substrate</name>
    </ligand>
</feature>
<sequence>MTEKITPEVVAQHGLTQAEYDEVKRHLGREPNLTELGVFSVMWSEHCSYKSSRVHLKTFPTSGPRVLQGPGENAGVVDLGDGLAAAFKMESHNHPSYIEPYQGAATGVGGILRDVFTMGARPIASANSLRFGDPSHPKTAYLLEGVVAGIGGYGNCMGVPTVAGEVMFHPSYNGNCLVNAFTLGILPADKIFLGTAAGVGNPVMYIGAKTGRDGIHGATMASAEFDASTEEKRPTVQVGDPFMEKLLLEACLELFKTDAVVGIQDMGAAGFTSSSVEMAGRAGNGLDLFLDQVPLREEGMTPYEILLSESQERMLLVAAEGKEDMVRKICTKWDLDVAIVGRVTGTGRWRAHWHGKVVADLPVDPLTEGAPKYQRPMTPHPALPALHAFDLSTVPEPADLGDTLLRLLARPTIASKEWVYQQYDHMVRLVGAVRPGGDAAVVRIATGDERHAGKGIAISVGANGRYCFLDPHLGAQHAVAECARNIACVGGEPIAVTDCLNFGNPEKPEIMWQFAECVRGIGDACRALGTPVVSGNVSLYNETEGQGILPTPTIGMVGLLPDVEKTCTSAFKNAGDVIALVGTLQGEVGGSEYLSAEHGREAGHPPALDLAKEKAVQETVRRAVREGLLSSAHDCSDGGLAVALAECCMMHGVPAGAEKAPWIGAAVRVPFPARKDFVLFGEDASRILVSMPKESAARFVALAQECGAPVIRLGAVGGDTLEIQGALSVPVAELAKAWRDGVPAVLRRDVGHAAASGIAREPQEPLP</sequence>
<keyword id="KW-0067">ATP-binding</keyword>
<keyword id="KW-0963">Cytoplasm</keyword>
<keyword id="KW-0436">Ligase</keyword>
<keyword id="KW-0460">Magnesium</keyword>
<keyword id="KW-0479">Metal-binding</keyword>
<keyword id="KW-0547">Nucleotide-binding</keyword>
<keyword id="KW-0658">Purine biosynthesis</keyword>
<keyword id="KW-1185">Reference proteome</keyword>
<accession>A7HIJ4</accession>